<accession>P9WHP0</accession>
<accession>L0T5A1</accession>
<accession>P96254</accession>
<keyword id="KW-0012">Acyltransferase</keyword>
<keyword id="KW-0963">Cytoplasm</keyword>
<keyword id="KW-1185">Reference proteome</keyword>
<keyword id="KW-0808">Transferase</keyword>
<comment type="function">
    <text evidence="1">Involved in acetate metabolism.</text>
</comment>
<comment type="catalytic activity">
    <reaction>
        <text>acetyl-CoA + phosphate = acetyl phosphate + CoA</text>
        <dbReference type="Rhea" id="RHEA:19521"/>
        <dbReference type="ChEBI" id="CHEBI:22191"/>
        <dbReference type="ChEBI" id="CHEBI:43474"/>
        <dbReference type="ChEBI" id="CHEBI:57287"/>
        <dbReference type="ChEBI" id="CHEBI:57288"/>
        <dbReference type="EC" id="2.3.1.8"/>
    </reaction>
</comment>
<comment type="pathway">
    <text>Metabolic intermediate biosynthesis; acetyl-CoA biosynthesis; acetyl-CoA from acetate: step 2/2.</text>
</comment>
<comment type="subcellular location">
    <subcellularLocation>
        <location evidence="2">Cytoplasm</location>
    </subcellularLocation>
</comment>
<comment type="domain">
    <text evidence="1">The N-terminal region seems to be important for proper quaternary structure. The C-terminal region contains the substrate-binding site (By similarity).</text>
</comment>
<comment type="similarity">
    <text evidence="2">In the N-terminal section; belongs to the CobB/CobQ family.</text>
</comment>
<comment type="similarity">
    <text evidence="2">In the C-terminal section; belongs to the phosphate acetyltransferase and butyryltransferase family.</text>
</comment>
<sequence length="690" mass="72949">MADSSAIYLAAPESQTGKSTIALGLLHRLTAMVAKVGVFRPITRLSAERDYILELLLAHTSAGLPYERCVGVTYQQLHADRDDAIAEIVDSYHAMADECDAVVVVGSDYTDVTSPTELSVNGRIAVNLGAPVLLTVRAKDRTPDQVASVVEVCLAELDTQRAHTAAVVANRCELSAIPAVTDALRRFTPPSYVVPEEPLLSAPTVAELTQAVNGAVVSGDVALREREVMGVLAAGMTADHVLERLTDGMAVITPGDRSDVVLAVASAHAAEGFPSLSCIVLNGGFQLHPAIAALVSGLRLRLPVIATALGTYDTASAAASARGLVTATSQRKIDTALELMDRHVDVAGLLAQLTIPIPTVTTPQMFTYRLLQQARSDLMRIVLPEGDDDRILKSAGRLLQRGIVDLTILGDEAKVRLRAAELGVDLDGATVIEPCASELHDQFADQYAQLRKAKGITVEHAREIMNDATYFGTMLVHNCHADGMVSGAAHTTAHTVRPALEIIKTVPGISTVSSIFLMCLPDRVLAYGDCAIIPNPTVEQLADIAICSARTAAQFGIEPRVAMLSYSTGDSGKGADVDKVRAATELVRAREPQLPVEGPIQYDAAVEPSVAATKLRDSPVAGRATVLIFPDLNTGNNTYKAVQRSAGAIAIGPVLQGLRKPVNDLSRGALVDDIVNTVAITAIQAQGVHE</sequence>
<proteinExistence type="inferred from homology"/>
<evidence type="ECO:0000250" key="1"/>
<evidence type="ECO:0000305" key="2"/>
<organism>
    <name type="scientific">Mycobacterium tuberculosis (strain CDC 1551 / Oshkosh)</name>
    <dbReference type="NCBI Taxonomy" id="83331"/>
    <lineage>
        <taxon>Bacteria</taxon>
        <taxon>Bacillati</taxon>
        <taxon>Actinomycetota</taxon>
        <taxon>Actinomycetes</taxon>
        <taxon>Mycobacteriales</taxon>
        <taxon>Mycobacteriaceae</taxon>
        <taxon>Mycobacterium</taxon>
        <taxon>Mycobacterium tuberculosis complex</taxon>
    </lineage>
</organism>
<reference key="1">
    <citation type="journal article" date="2002" name="J. Bacteriol.">
        <title>Whole-genome comparison of Mycobacterium tuberculosis clinical and laboratory strains.</title>
        <authorList>
            <person name="Fleischmann R.D."/>
            <person name="Alland D."/>
            <person name="Eisen J.A."/>
            <person name="Carpenter L."/>
            <person name="White O."/>
            <person name="Peterson J.D."/>
            <person name="DeBoy R.T."/>
            <person name="Dodson R.J."/>
            <person name="Gwinn M.L."/>
            <person name="Haft D.H."/>
            <person name="Hickey E.K."/>
            <person name="Kolonay J.F."/>
            <person name="Nelson W.C."/>
            <person name="Umayam L.A."/>
            <person name="Ermolaeva M.D."/>
            <person name="Salzberg S.L."/>
            <person name="Delcher A."/>
            <person name="Utterback T.R."/>
            <person name="Weidman J.F."/>
            <person name="Khouri H.M."/>
            <person name="Gill J."/>
            <person name="Mikula A."/>
            <person name="Bishai W."/>
            <person name="Jacobs W.R. Jr."/>
            <person name="Venter J.C."/>
            <person name="Fraser C.M."/>
        </authorList>
    </citation>
    <scope>NUCLEOTIDE SEQUENCE [LARGE SCALE GENOMIC DNA]</scope>
    <source>
        <strain>CDC 1551 / Oshkosh</strain>
    </source>
</reference>
<protein>
    <recommendedName>
        <fullName>Phosphate acetyltransferase</fullName>
        <ecNumber>2.3.1.8</ecNumber>
    </recommendedName>
    <alternativeName>
        <fullName>Phosphotransacetylase</fullName>
    </alternativeName>
</protein>
<feature type="chain" id="PRO_0000428151" description="Phosphate acetyltransferase">
    <location>
        <begin position="1"/>
        <end position="690"/>
    </location>
</feature>
<feature type="region of interest" description="Phosphate acetyltransferase">
    <location>
        <begin position="365"/>
        <end position="690"/>
    </location>
</feature>
<dbReference type="EC" id="2.3.1.8"/>
<dbReference type="EMBL" id="AE000516">
    <property type="protein sequence ID" value="AAK44645.1"/>
    <property type="molecule type" value="Genomic_DNA"/>
</dbReference>
<dbReference type="PIR" id="F70628">
    <property type="entry name" value="F70628"/>
</dbReference>
<dbReference type="RefSeq" id="WP_003898439.1">
    <property type="nucleotide sequence ID" value="NZ_KK341227.1"/>
</dbReference>
<dbReference type="SMR" id="P9WHP0"/>
<dbReference type="KEGG" id="mtc:MT0421"/>
<dbReference type="PATRIC" id="fig|83331.31.peg.450"/>
<dbReference type="HOGENOM" id="CLU_019723_3_0_11"/>
<dbReference type="UniPathway" id="UPA00340">
    <property type="reaction ID" value="UER00459"/>
</dbReference>
<dbReference type="Proteomes" id="UP000001020">
    <property type="component" value="Chromosome"/>
</dbReference>
<dbReference type="GO" id="GO:0005737">
    <property type="term" value="C:cytoplasm"/>
    <property type="evidence" value="ECO:0007669"/>
    <property type="project" value="UniProtKB-SubCell"/>
</dbReference>
<dbReference type="GO" id="GO:0008959">
    <property type="term" value="F:phosphate acetyltransferase activity"/>
    <property type="evidence" value="ECO:0007669"/>
    <property type="project" value="UniProtKB-EC"/>
</dbReference>
<dbReference type="GO" id="GO:0006085">
    <property type="term" value="P:acetyl-CoA biosynthetic process"/>
    <property type="evidence" value="ECO:0007669"/>
    <property type="project" value="UniProtKB-UniPathway"/>
</dbReference>
<dbReference type="FunFam" id="3.40.50.10750:FF:000001">
    <property type="entry name" value="Phosphate acetyltransferase"/>
    <property type="match status" value="1"/>
</dbReference>
<dbReference type="Gene3D" id="3.40.50.10950">
    <property type="match status" value="1"/>
</dbReference>
<dbReference type="Gene3D" id="3.40.1390.20">
    <property type="entry name" value="HprK N-terminal domain-like"/>
    <property type="match status" value="1"/>
</dbReference>
<dbReference type="Gene3D" id="3.40.50.10750">
    <property type="entry name" value="Isocitrate/Isopropylmalate dehydrogenase-like"/>
    <property type="match status" value="1"/>
</dbReference>
<dbReference type="Gene3D" id="3.40.50.300">
    <property type="entry name" value="P-loop containing nucleotide triphosphate hydrolases"/>
    <property type="match status" value="1"/>
</dbReference>
<dbReference type="InterPro" id="IPR010766">
    <property type="entry name" value="DRTGG"/>
</dbReference>
<dbReference type="InterPro" id="IPR016475">
    <property type="entry name" value="P-Actrans_bac"/>
</dbReference>
<dbReference type="InterPro" id="IPR027417">
    <property type="entry name" value="P-loop_NTPase"/>
</dbReference>
<dbReference type="InterPro" id="IPR004614">
    <property type="entry name" value="P_AcTrfase"/>
</dbReference>
<dbReference type="InterPro" id="IPR042113">
    <property type="entry name" value="P_AcTrfase_dom1"/>
</dbReference>
<dbReference type="InterPro" id="IPR042112">
    <property type="entry name" value="P_AcTrfase_dom2"/>
</dbReference>
<dbReference type="InterPro" id="IPR050500">
    <property type="entry name" value="Phos_Acetyltrans/Butyryltrans"/>
</dbReference>
<dbReference type="InterPro" id="IPR002505">
    <property type="entry name" value="PTA_PTB"/>
</dbReference>
<dbReference type="InterPro" id="IPR028979">
    <property type="entry name" value="Ser_kin/Pase_Hpr-like_N_sf"/>
</dbReference>
<dbReference type="NCBIfam" id="NF004167">
    <property type="entry name" value="PRK05632.1"/>
    <property type="match status" value="1"/>
</dbReference>
<dbReference type="NCBIfam" id="NF007233">
    <property type="entry name" value="PRK09653.1"/>
    <property type="match status" value="1"/>
</dbReference>
<dbReference type="NCBIfam" id="TIGR00651">
    <property type="entry name" value="pta"/>
    <property type="match status" value="1"/>
</dbReference>
<dbReference type="PANTHER" id="PTHR43356">
    <property type="entry name" value="PHOSPHATE ACETYLTRANSFERASE"/>
    <property type="match status" value="1"/>
</dbReference>
<dbReference type="PANTHER" id="PTHR43356:SF3">
    <property type="entry name" value="PHOSPHATE ACETYLTRANSFERASE"/>
    <property type="match status" value="1"/>
</dbReference>
<dbReference type="Pfam" id="PF13500">
    <property type="entry name" value="AAA_26"/>
    <property type="match status" value="1"/>
</dbReference>
<dbReference type="Pfam" id="PF07085">
    <property type="entry name" value="DRTGG"/>
    <property type="match status" value="1"/>
</dbReference>
<dbReference type="Pfam" id="PF01515">
    <property type="entry name" value="PTA_PTB"/>
    <property type="match status" value="1"/>
</dbReference>
<dbReference type="PIRSF" id="PIRSF006107">
    <property type="entry name" value="PhpActrans_proteobac"/>
    <property type="match status" value="1"/>
</dbReference>
<dbReference type="SUPFAM" id="SSF75138">
    <property type="entry name" value="HprK N-terminal domain-like"/>
    <property type="match status" value="1"/>
</dbReference>
<dbReference type="SUPFAM" id="SSF53659">
    <property type="entry name" value="Isocitrate/Isopropylmalate dehydrogenase-like"/>
    <property type="match status" value="1"/>
</dbReference>
<dbReference type="SUPFAM" id="SSF52540">
    <property type="entry name" value="P-loop containing nucleoside triphosphate hydrolases"/>
    <property type="match status" value="1"/>
</dbReference>
<gene>
    <name type="primary">pta</name>
    <name type="ordered locus">MT0421</name>
</gene>
<name>PTA_MYCTO</name>